<organism>
    <name type="scientific">Mycobacterium bovis (strain BCG / Tokyo 172 / ATCC 35737 / TMC 1019)</name>
    <dbReference type="NCBI Taxonomy" id="561275"/>
    <lineage>
        <taxon>Bacteria</taxon>
        <taxon>Bacillati</taxon>
        <taxon>Actinomycetota</taxon>
        <taxon>Actinomycetes</taxon>
        <taxon>Mycobacteriales</taxon>
        <taxon>Mycobacteriaceae</taxon>
        <taxon>Mycobacterium</taxon>
        <taxon>Mycobacterium tuberculosis complex</taxon>
    </lineage>
</organism>
<sequence>MSVPRVGVLALQGDTREHLAALRECGAEPMTVRRRDELDAVDALVIPGGESTTMSHLLLDLDLLGPLRARLADGLPAYGSCAGMILLASEILDAGAAGRQALPLRAMNMTVRRNAFGSQVDSFEGDIEFAGLDDPVRAVFIRAPWVERVGDGVQVLARAAGHIVAVRQGAVLATAFHPEMTGDRRIHQLFVDIVTSAA</sequence>
<reference key="1">
    <citation type="journal article" date="2009" name="Vaccine">
        <title>Whole genome sequence analysis of Mycobacterium bovis bacillus Calmette-Guerin (BCG) Tokyo 172: a comparative study of BCG vaccine substrains.</title>
        <authorList>
            <person name="Seki M."/>
            <person name="Honda I."/>
            <person name="Fujita I."/>
            <person name="Yano I."/>
            <person name="Yamamoto S."/>
            <person name="Koyama A."/>
        </authorList>
    </citation>
    <scope>NUCLEOTIDE SEQUENCE [LARGE SCALE GENOMIC DNA]</scope>
    <source>
        <strain>BCG / Tokyo 172 / ATCC 35737 / TMC 1019</strain>
    </source>
</reference>
<dbReference type="EC" id="4.3.3.6" evidence="1"/>
<dbReference type="EC" id="3.5.1.2" evidence="1"/>
<dbReference type="EMBL" id="AP010918">
    <property type="protein sequence ID" value="BAH26904.1"/>
    <property type="molecule type" value="Genomic_DNA"/>
</dbReference>
<dbReference type="RefSeq" id="WP_003413465.1">
    <property type="nucleotide sequence ID" value="NZ_CP014566.1"/>
</dbReference>
<dbReference type="SMR" id="C1AF75"/>
<dbReference type="MEROPS" id="C26.A32"/>
<dbReference type="KEGG" id="mbt:JTY_2623"/>
<dbReference type="HOGENOM" id="CLU_069674_2_0_11"/>
<dbReference type="UniPathway" id="UPA00245"/>
<dbReference type="GO" id="GO:0005829">
    <property type="term" value="C:cytosol"/>
    <property type="evidence" value="ECO:0007669"/>
    <property type="project" value="TreeGrafter"/>
</dbReference>
<dbReference type="GO" id="GO:1903600">
    <property type="term" value="C:glutaminase complex"/>
    <property type="evidence" value="ECO:0007669"/>
    <property type="project" value="TreeGrafter"/>
</dbReference>
<dbReference type="GO" id="GO:0004359">
    <property type="term" value="F:glutaminase activity"/>
    <property type="evidence" value="ECO:0007669"/>
    <property type="project" value="UniProtKB-UniRule"/>
</dbReference>
<dbReference type="GO" id="GO:0036381">
    <property type="term" value="F:pyridoxal 5'-phosphate synthase (glutamine hydrolysing) activity"/>
    <property type="evidence" value="ECO:0007669"/>
    <property type="project" value="UniProtKB-UniRule"/>
</dbReference>
<dbReference type="GO" id="GO:0006543">
    <property type="term" value="P:glutamine catabolic process"/>
    <property type="evidence" value="ECO:0007669"/>
    <property type="project" value="UniProtKB-UniRule"/>
</dbReference>
<dbReference type="GO" id="GO:0042823">
    <property type="term" value="P:pyridoxal phosphate biosynthetic process"/>
    <property type="evidence" value="ECO:0007669"/>
    <property type="project" value="UniProtKB-UniRule"/>
</dbReference>
<dbReference type="GO" id="GO:0008614">
    <property type="term" value="P:pyridoxine metabolic process"/>
    <property type="evidence" value="ECO:0007669"/>
    <property type="project" value="TreeGrafter"/>
</dbReference>
<dbReference type="CDD" id="cd01749">
    <property type="entry name" value="GATase1_PB"/>
    <property type="match status" value="1"/>
</dbReference>
<dbReference type="FunFam" id="3.40.50.880:FF:000010">
    <property type="entry name" value="uncharacterized protein LOC100176842 isoform X2"/>
    <property type="match status" value="1"/>
</dbReference>
<dbReference type="Gene3D" id="3.40.50.880">
    <property type="match status" value="1"/>
</dbReference>
<dbReference type="HAMAP" id="MF_01615">
    <property type="entry name" value="PdxT"/>
    <property type="match status" value="1"/>
</dbReference>
<dbReference type="InterPro" id="IPR029062">
    <property type="entry name" value="Class_I_gatase-like"/>
</dbReference>
<dbReference type="InterPro" id="IPR002161">
    <property type="entry name" value="PdxT/SNO"/>
</dbReference>
<dbReference type="InterPro" id="IPR021196">
    <property type="entry name" value="PdxT/SNO_CS"/>
</dbReference>
<dbReference type="NCBIfam" id="TIGR03800">
    <property type="entry name" value="PLP_synth_Pdx2"/>
    <property type="match status" value="1"/>
</dbReference>
<dbReference type="PANTHER" id="PTHR31559">
    <property type="entry name" value="PYRIDOXAL 5'-PHOSPHATE SYNTHASE SUBUNIT SNO"/>
    <property type="match status" value="1"/>
</dbReference>
<dbReference type="PANTHER" id="PTHR31559:SF0">
    <property type="entry name" value="PYRIDOXAL 5'-PHOSPHATE SYNTHASE SUBUNIT SNO1-RELATED"/>
    <property type="match status" value="1"/>
</dbReference>
<dbReference type="Pfam" id="PF01174">
    <property type="entry name" value="SNO"/>
    <property type="match status" value="1"/>
</dbReference>
<dbReference type="PIRSF" id="PIRSF005639">
    <property type="entry name" value="Glut_amidoT_SNO"/>
    <property type="match status" value="1"/>
</dbReference>
<dbReference type="SUPFAM" id="SSF52317">
    <property type="entry name" value="Class I glutamine amidotransferase-like"/>
    <property type="match status" value="1"/>
</dbReference>
<dbReference type="PROSITE" id="PS01236">
    <property type="entry name" value="PDXT_SNO_1"/>
    <property type="match status" value="1"/>
</dbReference>
<dbReference type="PROSITE" id="PS51130">
    <property type="entry name" value="PDXT_SNO_2"/>
    <property type="match status" value="1"/>
</dbReference>
<keyword id="KW-0315">Glutamine amidotransferase</keyword>
<keyword id="KW-0378">Hydrolase</keyword>
<keyword id="KW-0456">Lyase</keyword>
<keyword id="KW-0663">Pyridoxal phosphate</keyword>
<proteinExistence type="inferred from homology"/>
<feature type="chain" id="PRO_1000185895" description="Pyridoxal 5'-phosphate synthase subunit PdxT">
    <location>
        <begin position="1"/>
        <end position="198"/>
    </location>
</feature>
<feature type="active site" description="Nucleophile" evidence="1">
    <location>
        <position position="81"/>
    </location>
</feature>
<feature type="active site" description="Charge relay system" evidence="1">
    <location>
        <position position="177"/>
    </location>
</feature>
<feature type="active site" description="Charge relay system" evidence="1">
    <location>
        <position position="179"/>
    </location>
</feature>
<feature type="binding site" evidence="1">
    <location>
        <begin position="49"/>
        <end position="51"/>
    </location>
    <ligand>
        <name>L-glutamine</name>
        <dbReference type="ChEBI" id="CHEBI:58359"/>
    </ligand>
</feature>
<feature type="binding site" evidence="1">
    <location>
        <position position="113"/>
    </location>
    <ligand>
        <name>L-glutamine</name>
        <dbReference type="ChEBI" id="CHEBI:58359"/>
    </ligand>
</feature>
<feature type="binding site" evidence="1">
    <location>
        <begin position="141"/>
        <end position="142"/>
    </location>
    <ligand>
        <name>L-glutamine</name>
        <dbReference type="ChEBI" id="CHEBI:58359"/>
    </ligand>
</feature>
<protein>
    <recommendedName>
        <fullName evidence="1">Pyridoxal 5'-phosphate synthase subunit PdxT</fullName>
        <ecNumber evidence="1">4.3.3.6</ecNumber>
    </recommendedName>
    <alternativeName>
        <fullName evidence="1">Pdx2</fullName>
    </alternativeName>
    <alternativeName>
        <fullName evidence="1">Pyridoxal 5'-phosphate synthase glutaminase subunit</fullName>
        <ecNumber evidence="1">3.5.1.2</ecNumber>
    </alternativeName>
</protein>
<name>PDXT_MYCBT</name>
<evidence type="ECO:0000255" key="1">
    <source>
        <dbReference type="HAMAP-Rule" id="MF_01615"/>
    </source>
</evidence>
<accession>C1AF75</accession>
<gene>
    <name evidence="1" type="primary">pdxT</name>
    <name type="ordered locus">JTY_2623</name>
</gene>
<comment type="function">
    <text evidence="1">Catalyzes the hydrolysis of glutamine to glutamate and ammonia as part of the biosynthesis of pyridoxal 5'-phosphate. The resulting ammonia molecule is channeled to the active site of PdxS.</text>
</comment>
<comment type="catalytic activity">
    <reaction evidence="1">
        <text>aldehydo-D-ribose 5-phosphate + D-glyceraldehyde 3-phosphate + L-glutamine = pyridoxal 5'-phosphate + L-glutamate + phosphate + 3 H2O + H(+)</text>
        <dbReference type="Rhea" id="RHEA:31507"/>
        <dbReference type="ChEBI" id="CHEBI:15377"/>
        <dbReference type="ChEBI" id="CHEBI:15378"/>
        <dbReference type="ChEBI" id="CHEBI:29985"/>
        <dbReference type="ChEBI" id="CHEBI:43474"/>
        <dbReference type="ChEBI" id="CHEBI:58273"/>
        <dbReference type="ChEBI" id="CHEBI:58359"/>
        <dbReference type="ChEBI" id="CHEBI:59776"/>
        <dbReference type="ChEBI" id="CHEBI:597326"/>
        <dbReference type="EC" id="4.3.3.6"/>
    </reaction>
</comment>
<comment type="catalytic activity">
    <reaction evidence="1">
        <text>L-glutamine + H2O = L-glutamate + NH4(+)</text>
        <dbReference type="Rhea" id="RHEA:15889"/>
        <dbReference type="ChEBI" id="CHEBI:15377"/>
        <dbReference type="ChEBI" id="CHEBI:28938"/>
        <dbReference type="ChEBI" id="CHEBI:29985"/>
        <dbReference type="ChEBI" id="CHEBI:58359"/>
        <dbReference type="EC" id="3.5.1.2"/>
    </reaction>
</comment>
<comment type="pathway">
    <text evidence="1">Cofactor biosynthesis; pyridoxal 5'-phosphate biosynthesis.</text>
</comment>
<comment type="subunit">
    <text evidence="1">In the presence of PdxS, forms a dodecamer of heterodimers. Only shows activity in the heterodimer.</text>
</comment>
<comment type="similarity">
    <text evidence="1">Belongs to the glutaminase PdxT/SNO family.</text>
</comment>